<feature type="chain" id="PRO_0000242431" description="Large ribosomal subunit protein uL4">
    <location>
        <begin position="1"/>
        <end position="207"/>
    </location>
</feature>
<feature type="region of interest" description="Disordered" evidence="2">
    <location>
        <begin position="50"/>
        <end position="76"/>
    </location>
</feature>
<name>RL4_RICTY</name>
<protein>
    <recommendedName>
        <fullName evidence="1">Large ribosomal subunit protein uL4</fullName>
    </recommendedName>
    <alternativeName>
        <fullName evidence="3">50S ribosomal protein L4</fullName>
    </alternativeName>
</protein>
<comment type="function">
    <text evidence="1">One of the primary rRNA binding proteins, this protein initially binds near the 5'-end of the 23S rRNA. It is important during the early stages of 50S assembly. It makes multiple contacts with different domains of the 23S rRNA in the assembled 50S subunit and ribosome.</text>
</comment>
<comment type="function">
    <text evidence="1">Forms part of the polypeptide exit tunnel.</text>
</comment>
<comment type="subunit">
    <text evidence="1">Part of the 50S ribosomal subunit.</text>
</comment>
<comment type="similarity">
    <text evidence="1">Belongs to the universal ribosomal protein uL4 family.</text>
</comment>
<gene>
    <name evidence="1" type="primary">rplD</name>
    <name type="ordered locus">RT0650</name>
</gene>
<reference key="1">
    <citation type="journal article" date="2004" name="J. Bacteriol.">
        <title>Complete genome sequence of Rickettsia typhi and comparison with sequences of other Rickettsiae.</title>
        <authorList>
            <person name="McLeod M.P."/>
            <person name="Qin X."/>
            <person name="Karpathy S.E."/>
            <person name="Gioia J."/>
            <person name="Highlander S.K."/>
            <person name="Fox G.E."/>
            <person name="McNeill T.Z."/>
            <person name="Jiang H."/>
            <person name="Muzny D."/>
            <person name="Jacob L.S."/>
            <person name="Hawes A.C."/>
            <person name="Sodergren E."/>
            <person name="Gill R."/>
            <person name="Hume J."/>
            <person name="Morgan M."/>
            <person name="Fan G."/>
            <person name="Amin A.G."/>
            <person name="Gibbs R.A."/>
            <person name="Hong C."/>
            <person name="Yu X.-J."/>
            <person name="Walker D.H."/>
            <person name="Weinstock G.M."/>
        </authorList>
    </citation>
    <scope>NUCLEOTIDE SEQUENCE [LARGE SCALE GENOMIC DNA]</scope>
    <source>
        <strain>ATCC VR-144 / Wilmington</strain>
    </source>
</reference>
<keyword id="KW-0687">Ribonucleoprotein</keyword>
<keyword id="KW-0689">Ribosomal protein</keyword>
<keyword id="KW-0694">RNA-binding</keyword>
<keyword id="KW-0699">rRNA-binding</keyword>
<sequence length="207" mass="23080">MKTKILSLANEEVGEITLNKDIFAVEFIRDDIIKQVIDWQRAKAMSGNHKTKTVSEVSGTTKKPFKQKGTGNARQGSLRSIQMRGGGISHGPKVRSHAIKLPKKVRKLGLIHALSEKCAAGKLLIINSLKLEKPKTSVLVNLLNKFQGQSFFIIDGNKVDTNFSLATKNIYNTLIVPQIGANVYDIIRHEYVLLSQEAVSFLEERLR</sequence>
<organism>
    <name type="scientific">Rickettsia typhi (strain ATCC VR-144 / Wilmington)</name>
    <dbReference type="NCBI Taxonomy" id="257363"/>
    <lineage>
        <taxon>Bacteria</taxon>
        <taxon>Pseudomonadati</taxon>
        <taxon>Pseudomonadota</taxon>
        <taxon>Alphaproteobacteria</taxon>
        <taxon>Rickettsiales</taxon>
        <taxon>Rickettsiaceae</taxon>
        <taxon>Rickettsieae</taxon>
        <taxon>Rickettsia</taxon>
        <taxon>typhus group</taxon>
    </lineage>
</organism>
<accession>Q68W79</accession>
<dbReference type="EMBL" id="AE017197">
    <property type="protein sequence ID" value="AAU04113.1"/>
    <property type="molecule type" value="Genomic_DNA"/>
</dbReference>
<dbReference type="RefSeq" id="WP_011191090.1">
    <property type="nucleotide sequence ID" value="NC_006142.1"/>
</dbReference>
<dbReference type="SMR" id="Q68W79"/>
<dbReference type="KEGG" id="rty:RT0650"/>
<dbReference type="eggNOG" id="COG0088">
    <property type="taxonomic scope" value="Bacteria"/>
</dbReference>
<dbReference type="HOGENOM" id="CLU_041575_5_1_5"/>
<dbReference type="OrthoDB" id="9803201at2"/>
<dbReference type="Proteomes" id="UP000000604">
    <property type="component" value="Chromosome"/>
</dbReference>
<dbReference type="GO" id="GO:1990904">
    <property type="term" value="C:ribonucleoprotein complex"/>
    <property type="evidence" value="ECO:0007669"/>
    <property type="project" value="UniProtKB-KW"/>
</dbReference>
<dbReference type="GO" id="GO:0005840">
    <property type="term" value="C:ribosome"/>
    <property type="evidence" value="ECO:0007669"/>
    <property type="project" value="UniProtKB-KW"/>
</dbReference>
<dbReference type="GO" id="GO:0019843">
    <property type="term" value="F:rRNA binding"/>
    <property type="evidence" value="ECO:0007669"/>
    <property type="project" value="UniProtKB-UniRule"/>
</dbReference>
<dbReference type="GO" id="GO:0003735">
    <property type="term" value="F:structural constituent of ribosome"/>
    <property type="evidence" value="ECO:0007669"/>
    <property type="project" value="InterPro"/>
</dbReference>
<dbReference type="GO" id="GO:0006412">
    <property type="term" value="P:translation"/>
    <property type="evidence" value="ECO:0007669"/>
    <property type="project" value="UniProtKB-UniRule"/>
</dbReference>
<dbReference type="FunFam" id="3.40.1370.10:FF:000015">
    <property type="entry name" value="50S ribosomal protein L4"/>
    <property type="match status" value="1"/>
</dbReference>
<dbReference type="Gene3D" id="3.40.1370.10">
    <property type="match status" value="1"/>
</dbReference>
<dbReference type="HAMAP" id="MF_01328_B">
    <property type="entry name" value="Ribosomal_uL4_B"/>
    <property type="match status" value="1"/>
</dbReference>
<dbReference type="InterPro" id="IPR002136">
    <property type="entry name" value="Ribosomal_uL4"/>
</dbReference>
<dbReference type="InterPro" id="IPR013005">
    <property type="entry name" value="Ribosomal_uL4-like"/>
</dbReference>
<dbReference type="InterPro" id="IPR023574">
    <property type="entry name" value="Ribosomal_uL4_dom_sf"/>
</dbReference>
<dbReference type="NCBIfam" id="TIGR03953">
    <property type="entry name" value="rplD_bact"/>
    <property type="match status" value="1"/>
</dbReference>
<dbReference type="PANTHER" id="PTHR10746">
    <property type="entry name" value="50S RIBOSOMAL PROTEIN L4"/>
    <property type="match status" value="1"/>
</dbReference>
<dbReference type="PANTHER" id="PTHR10746:SF6">
    <property type="entry name" value="LARGE RIBOSOMAL SUBUNIT PROTEIN UL4M"/>
    <property type="match status" value="1"/>
</dbReference>
<dbReference type="Pfam" id="PF00573">
    <property type="entry name" value="Ribosomal_L4"/>
    <property type="match status" value="1"/>
</dbReference>
<dbReference type="SUPFAM" id="SSF52166">
    <property type="entry name" value="Ribosomal protein L4"/>
    <property type="match status" value="1"/>
</dbReference>
<evidence type="ECO:0000255" key="1">
    <source>
        <dbReference type="HAMAP-Rule" id="MF_01328"/>
    </source>
</evidence>
<evidence type="ECO:0000256" key="2">
    <source>
        <dbReference type="SAM" id="MobiDB-lite"/>
    </source>
</evidence>
<evidence type="ECO:0000305" key="3"/>
<proteinExistence type="inferred from homology"/>